<evidence type="ECO:0000250" key="1"/>
<evidence type="ECO:0000255" key="2">
    <source>
        <dbReference type="PROSITE-ProRule" id="PRU10001"/>
    </source>
</evidence>
<evidence type="ECO:0000269" key="3">
    <source>
    </source>
</evidence>
<evidence type="ECO:0000305" key="4"/>
<organism>
    <name type="scientific">Dickeya dadantii (strain 3937)</name>
    <name type="common">Erwinia chrysanthemi (strain 3937)</name>
    <dbReference type="NCBI Taxonomy" id="198628"/>
    <lineage>
        <taxon>Bacteria</taxon>
        <taxon>Pseudomonadati</taxon>
        <taxon>Pseudomonadota</taxon>
        <taxon>Gammaproteobacteria</taxon>
        <taxon>Enterobacterales</taxon>
        <taxon>Pectobacteriaceae</taxon>
        <taxon>Dickeya</taxon>
    </lineage>
</organism>
<sequence>MILNTFNLQGKVALITGCDTGLGQGMAVGLAEAGCDIVGVNIVEPKETIEKVTAVGRRFLSLTADMSDISGHAALVEKAVAEFGKVDILVNNAGIIRREDAIEFSEKNWDDVMNLNIKSVFFMSQTVARQFIKQGHGGKIINIASMLSFQGGIRVPSYTASKSAVMGITRLLANEWAKHNINVNAIAPGYMATNNTQQLRADQDRSKEILDRIPAGRWGLPQDLQGPAVFLASSASDYVNGYTIAVDGGWLAR</sequence>
<proteinExistence type="evidence at protein level"/>
<keyword id="KW-0520">NAD</keyword>
<keyword id="KW-0560">Oxidoreductase</keyword>
<keyword id="KW-1185">Reference proteome</keyword>
<protein>
    <recommendedName>
        <fullName>2-dehydro-3-deoxy-D-gluconate 5-dehydrogenase</fullName>
        <ecNumber>1.1.1.127</ecNumber>
    </recommendedName>
    <alternativeName>
        <fullName>2-keto-3-deoxygluconate 5-dehydrogenase</fullName>
    </alternativeName>
    <alternativeName>
        <fullName>2-keto-3-deoxygluconate oxidoreductase</fullName>
        <shortName>KDG oxidoreductase</shortName>
    </alternativeName>
</protein>
<comment type="function">
    <text evidence="3">Catalyzes the reduction of 2,5-diketo-3-deoxygluconate (DKII or 4,6-dihydroxy-2,5-dioxohexanoate) into 2-keto-3-deoxygluconate (KDG or 2-dehydro-3-deoxygluconate) with a concomitant oxidation of NADH.</text>
</comment>
<comment type="catalytic activity">
    <reaction evidence="3">
        <text>2-dehydro-3-deoxy-D-gluconate + NAD(+) = 3-deoxy-D-glycero-2,5-hexodiulosonate + NADH + H(+)</text>
        <dbReference type="Rhea" id="RHEA:24232"/>
        <dbReference type="ChEBI" id="CHEBI:15378"/>
        <dbReference type="ChEBI" id="CHEBI:29071"/>
        <dbReference type="ChEBI" id="CHEBI:57540"/>
        <dbReference type="ChEBI" id="CHEBI:57945"/>
        <dbReference type="ChEBI" id="CHEBI:57990"/>
        <dbReference type="EC" id="1.1.1.127"/>
    </reaction>
</comment>
<comment type="pathway">
    <text>Glycan metabolism; pectin degradation; 2-dehydro-3-deoxy-D-gluconate from pectin: step 5/5.</text>
</comment>
<comment type="similarity">
    <text evidence="4">Belongs to the short-chain dehydrogenases/reductases (SDR) family.</text>
</comment>
<dbReference type="EC" id="1.1.1.127"/>
<dbReference type="EMBL" id="X62073">
    <property type="protein sequence ID" value="CAA43989.1"/>
    <property type="molecule type" value="Genomic_DNA"/>
</dbReference>
<dbReference type="EMBL" id="CP002038">
    <property type="protein sequence ID" value="ADM98616.1"/>
    <property type="molecule type" value="Genomic_DNA"/>
</dbReference>
<dbReference type="PIR" id="S17711">
    <property type="entry name" value="S17711"/>
</dbReference>
<dbReference type="RefSeq" id="WP_013318066.1">
    <property type="nucleotide sequence ID" value="NC_014500.1"/>
</dbReference>
<dbReference type="SMR" id="Q05528"/>
<dbReference type="STRING" id="198628.Dda3937_04595"/>
<dbReference type="GeneID" id="55489225"/>
<dbReference type="KEGG" id="ddd:Dda3937_04595"/>
<dbReference type="PATRIC" id="fig|198628.6.peg.2393"/>
<dbReference type="eggNOG" id="COG1028">
    <property type="taxonomic scope" value="Bacteria"/>
</dbReference>
<dbReference type="HOGENOM" id="CLU_010194_1_1_6"/>
<dbReference type="OrthoDB" id="9803333at2"/>
<dbReference type="BioCyc" id="MetaCyc:MONOMER-15643"/>
<dbReference type="UniPathway" id="UPA00545">
    <property type="reaction ID" value="UER00827"/>
</dbReference>
<dbReference type="Proteomes" id="UP000006859">
    <property type="component" value="Chromosome"/>
</dbReference>
<dbReference type="GO" id="GO:0047001">
    <property type="term" value="F:2-dehydro-3-deoxy-D-gluconate 5-dehydrogenase activity"/>
    <property type="evidence" value="ECO:0007669"/>
    <property type="project" value="UniProtKB-EC"/>
</dbReference>
<dbReference type="GO" id="GO:0008678">
    <property type="term" value="F:2-deoxy-D-gluconate 3-dehydrogenase activity"/>
    <property type="evidence" value="ECO:0007669"/>
    <property type="project" value="InterPro"/>
</dbReference>
<dbReference type="GO" id="GO:0051287">
    <property type="term" value="F:NAD binding"/>
    <property type="evidence" value="ECO:0007669"/>
    <property type="project" value="InterPro"/>
</dbReference>
<dbReference type="GO" id="GO:0045490">
    <property type="term" value="P:pectin catabolic process"/>
    <property type="evidence" value="ECO:0007669"/>
    <property type="project" value="UniProtKB-UniPathway"/>
</dbReference>
<dbReference type="CDD" id="cd05347">
    <property type="entry name" value="Ga5DH-like_SDR_c"/>
    <property type="match status" value="1"/>
</dbReference>
<dbReference type="FunFam" id="3.40.50.720:FF:000081">
    <property type="entry name" value="2-deoxy-D-gluconate 3-dehydrogenase"/>
    <property type="match status" value="1"/>
</dbReference>
<dbReference type="Gene3D" id="3.40.50.720">
    <property type="entry name" value="NAD(P)-binding Rossmann-like Domain"/>
    <property type="match status" value="1"/>
</dbReference>
<dbReference type="InterPro" id="IPR011286">
    <property type="entry name" value="2-deoxy-D-gluc_3_DH"/>
</dbReference>
<dbReference type="InterPro" id="IPR036291">
    <property type="entry name" value="NAD(P)-bd_dom_sf"/>
</dbReference>
<dbReference type="InterPro" id="IPR020904">
    <property type="entry name" value="Sc_DH/Rdtase_CS"/>
</dbReference>
<dbReference type="InterPro" id="IPR002347">
    <property type="entry name" value="SDR_fam"/>
</dbReference>
<dbReference type="NCBIfam" id="TIGR01832">
    <property type="entry name" value="kduD"/>
    <property type="match status" value="1"/>
</dbReference>
<dbReference type="NCBIfam" id="NF006528">
    <property type="entry name" value="PRK08993.1"/>
    <property type="match status" value="1"/>
</dbReference>
<dbReference type="PANTHER" id="PTHR42760:SF5">
    <property type="entry name" value="2-DEHYDRO-3-DEOXY-D-GLUCONATE 5-DEHYDROGENASE"/>
    <property type="match status" value="1"/>
</dbReference>
<dbReference type="PANTHER" id="PTHR42760">
    <property type="entry name" value="SHORT-CHAIN DEHYDROGENASES/REDUCTASES FAMILY MEMBER"/>
    <property type="match status" value="1"/>
</dbReference>
<dbReference type="Pfam" id="PF00106">
    <property type="entry name" value="adh_short"/>
    <property type="match status" value="1"/>
</dbReference>
<dbReference type="PRINTS" id="PR00081">
    <property type="entry name" value="GDHRDH"/>
</dbReference>
<dbReference type="PRINTS" id="PR00080">
    <property type="entry name" value="SDRFAMILY"/>
</dbReference>
<dbReference type="SUPFAM" id="SSF51735">
    <property type="entry name" value="NAD(P)-binding Rossmann-fold domains"/>
    <property type="match status" value="1"/>
</dbReference>
<dbReference type="PROSITE" id="PS00061">
    <property type="entry name" value="ADH_SHORT"/>
    <property type="match status" value="1"/>
</dbReference>
<gene>
    <name type="primary">kduD</name>
    <name type="ordered locus">Dda3937_04595</name>
</gene>
<name>KDUD_DICD3</name>
<reference key="1">
    <citation type="journal article" date="1991" name="Mol. Microbiol.">
        <title>Analysis of an Erwinia chrysanthemi gene cluster involved in pectin degradation.</title>
        <authorList>
            <person name="Condemine G."/>
            <person name="Robert-Baudouy J."/>
        </authorList>
    </citation>
    <scope>NUCLEOTIDE SEQUENCE [GENOMIC DNA]</scope>
    <scope>CATALYTIC ACTIVITY</scope>
    <scope>FUNCTION IN PECTIN DEGRADATION</scope>
    <source>
        <strain>3937</strain>
    </source>
</reference>
<reference key="2">
    <citation type="journal article" date="2011" name="J. Bacteriol.">
        <title>Genome sequence of the plant-pathogenic bacterium Dickeya dadantii 3937.</title>
        <authorList>
            <person name="Glasner J.D."/>
            <person name="Yang C.H."/>
            <person name="Reverchon S."/>
            <person name="Hugouvieux-Cotte-Pattat N."/>
            <person name="Condemine G."/>
            <person name="Bohin J.P."/>
            <person name="Van Gijsegem F."/>
            <person name="Yang S."/>
            <person name="Franza T."/>
            <person name="Expert D."/>
            <person name="Plunkett G. III"/>
            <person name="San Francisco M.J."/>
            <person name="Charkowski A.O."/>
            <person name="Py B."/>
            <person name="Bell K."/>
            <person name="Rauscher L."/>
            <person name="Rodriguez-Palenzuela P."/>
            <person name="Toussaint A."/>
            <person name="Holeva M.C."/>
            <person name="He S.Y."/>
            <person name="Douet V."/>
            <person name="Boccara M."/>
            <person name="Blanco C."/>
            <person name="Toth I."/>
            <person name="Anderson B.D."/>
            <person name="Biehl B.S."/>
            <person name="Mau B."/>
            <person name="Flynn S.M."/>
            <person name="Barras F."/>
            <person name="Lindeberg M."/>
            <person name="Birch P.R."/>
            <person name="Tsuyumu S."/>
            <person name="Shi X."/>
            <person name="Hibbing M."/>
            <person name="Yap M.N."/>
            <person name="Carpentier M."/>
            <person name="Dassa E."/>
            <person name="Umehara M."/>
            <person name="Kim J.F."/>
            <person name="Rusch M."/>
            <person name="Soni P."/>
            <person name="Mayhew G.F."/>
            <person name="Fouts D.E."/>
            <person name="Gill S.R."/>
            <person name="Blattner F.R."/>
            <person name="Keen N.T."/>
            <person name="Perna N.T."/>
        </authorList>
    </citation>
    <scope>NUCLEOTIDE SEQUENCE [LARGE SCALE GENOMIC DNA]</scope>
    <source>
        <strain>3937</strain>
    </source>
</reference>
<accession>Q05528</accession>
<accession>E0SDC4</accession>
<feature type="chain" id="PRO_0000054716" description="2-dehydro-3-deoxy-D-gluconate 5-dehydrogenase">
    <location>
        <begin position="1"/>
        <end position="253"/>
    </location>
</feature>
<feature type="active site" description="Proton acceptor" evidence="2">
    <location>
        <position position="158"/>
    </location>
</feature>
<feature type="binding site" evidence="1">
    <location>
        <begin position="14"/>
        <end position="38"/>
    </location>
    <ligand>
        <name>NAD(+)</name>
        <dbReference type="ChEBI" id="CHEBI:57540"/>
    </ligand>
</feature>
<feature type="binding site" evidence="1">
    <location>
        <position position="145"/>
    </location>
    <ligand>
        <name>substrate</name>
    </ligand>
</feature>
<feature type="sequence conflict" description="In Ref. 1; CAA43989." evidence="4" ref="1">
    <original>R</original>
    <variation>P</variation>
    <location>
        <position position="154"/>
    </location>
</feature>
<feature type="sequence conflict" description="In Ref. 1; CAA43989." evidence="4" ref="1">
    <original>SA</original>
    <variation>KR</variation>
    <location>
        <begin position="163"/>
        <end position="164"/>
    </location>
</feature>
<feature type="sequence conflict" description="In Ref. 1; CAA43989." evidence="4" ref="1">
    <original>LL</original>
    <variation>IV</variation>
    <location>
        <begin position="171"/>
        <end position="172"/>
    </location>
</feature>
<feature type="sequence conflict" description="In Ref. 1; CAA43989." evidence="4" ref="1">
    <original>QL</original>
    <variation>HV</variation>
    <location>
        <begin position="198"/>
        <end position="199"/>
    </location>
</feature>